<keyword id="KW-0067">ATP-binding</keyword>
<keyword id="KW-0963">Cytoplasm</keyword>
<keyword id="KW-0436">Ligase</keyword>
<keyword id="KW-0535">Nitrogen fixation</keyword>
<keyword id="KW-0547">Nucleotide-binding</keyword>
<accession>P04078</accession>
<proteinExistence type="evidence at transcript level"/>
<organism>
    <name type="scientific">Medicago sativa</name>
    <name type="common">Alfalfa</name>
    <dbReference type="NCBI Taxonomy" id="3879"/>
    <lineage>
        <taxon>Eukaryota</taxon>
        <taxon>Viridiplantae</taxon>
        <taxon>Streptophyta</taxon>
        <taxon>Embryophyta</taxon>
        <taxon>Tracheophyta</taxon>
        <taxon>Spermatophyta</taxon>
        <taxon>Magnoliopsida</taxon>
        <taxon>eudicotyledons</taxon>
        <taxon>Gunneridae</taxon>
        <taxon>Pentapetalae</taxon>
        <taxon>rosids</taxon>
        <taxon>fabids</taxon>
        <taxon>Fabales</taxon>
        <taxon>Fabaceae</taxon>
        <taxon>Papilionoideae</taxon>
        <taxon>50 kb inversion clade</taxon>
        <taxon>NPAAA clade</taxon>
        <taxon>Hologalegina</taxon>
        <taxon>IRL clade</taxon>
        <taxon>Trifolieae</taxon>
        <taxon>Medicago</taxon>
    </lineage>
</organism>
<dbReference type="EC" id="6.3.1.2"/>
<dbReference type="EMBL" id="K03282">
    <property type="protein sequence ID" value="AAA32654.1"/>
    <property type="molecule type" value="mRNA"/>
</dbReference>
<dbReference type="EMBL" id="X03931">
    <property type="protein sequence ID" value="CAA27570.1"/>
    <property type="molecule type" value="Genomic_DNA"/>
</dbReference>
<dbReference type="PIR" id="A26025">
    <property type="entry name" value="AJAAQ"/>
</dbReference>
<dbReference type="SMR" id="P04078"/>
<dbReference type="GO" id="GO:0005737">
    <property type="term" value="C:cytoplasm"/>
    <property type="evidence" value="ECO:0007669"/>
    <property type="project" value="UniProtKB-SubCell"/>
</dbReference>
<dbReference type="GO" id="GO:0005524">
    <property type="term" value="F:ATP binding"/>
    <property type="evidence" value="ECO:0007669"/>
    <property type="project" value="UniProtKB-KW"/>
</dbReference>
<dbReference type="GO" id="GO:0004356">
    <property type="term" value="F:glutamine synthetase activity"/>
    <property type="evidence" value="ECO:0007669"/>
    <property type="project" value="UniProtKB-EC"/>
</dbReference>
<dbReference type="GO" id="GO:0006542">
    <property type="term" value="P:glutamine biosynthetic process"/>
    <property type="evidence" value="ECO:0007669"/>
    <property type="project" value="InterPro"/>
</dbReference>
<dbReference type="FunFam" id="3.30.590.10:FF:000004">
    <property type="entry name" value="Glutamine synthetase"/>
    <property type="match status" value="1"/>
</dbReference>
<dbReference type="FunFam" id="3.10.20.70:FF:000003">
    <property type="entry name" value="Glutamine synthetase, chloroplastic"/>
    <property type="match status" value="1"/>
</dbReference>
<dbReference type="Gene3D" id="3.10.20.70">
    <property type="entry name" value="Glutamine synthetase, N-terminal domain"/>
    <property type="match status" value="1"/>
</dbReference>
<dbReference type="Gene3D" id="3.30.590.10">
    <property type="entry name" value="Glutamine synthetase/guanido kinase, catalytic domain"/>
    <property type="match status" value="1"/>
</dbReference>
<dbReference type="InterPro" id="IPR008147">
    <property type="entry name" value="Gln_synt_N"/>
</dbReference>
<dbReference type="InterPro" id="IPR036651">
    <property type="entry name" value="Gln_synt_N_sf"/>
</dbReference>
<dbReference type="InterPro" id="IPR014746">
    <property type="entry name" value="Gln_synth/guanido_kin_cat_dom"/>
</dbReference>
<dbReference type="InterPro" id="IPR008146">
    <property type="entry name" value="Gln_synth_cat_dom"/>
</dbReference>
<dbReference type="InterPro" id="IPR027303">
    <property type="entry name" value="Gln_synth_gly_rich_site"/>
</dbReference>
<dbReference type="InterPro" id="IPR027302">
    <property type="entry name" value="Gln_synth_N_conserv_site"/>
</dbReference>
<dbReference type="InterPro" id="IPR050292">
    <property type="entry name" value="Glutamine_Synthetase"/>
</dbReference>
<dbReference type="PANTHER" id="PTHR20852">
    <property type="entry name" value="GLUTAMINE SYNTHETASE"/>
    <property type="match status" value="1"/>
</dbReference>
<dbReference type="PANTHER" id="PTHR20852:SF113">
    <property type="entry name" value="GLUTAMINE SYNTHETASE CYTOSOLIC ISOZYME 1-4"/>
    <property type="match status" value="1"/>
</dbReference>
<dbReference type="Pfam" id="PF00120">
    <property type="entry name" value="Gln-synt_C"/>
    <property type="match status" value="1"/>
</dbReference>
<dbReference type="SMART" id="SM01230">
    <property type="entry name" value="Gln-synt_C"/>
    <property type="match status" value="1"/>
</dbReference>
<dbReference type="SUPFAM" id="SSF54368">
    <property type="entry name" value="Glutamine synthetase, N-terminal domain"/>
    <property type="match status" value="1"/>
</dbReference>
<dbReference type="SUPFAM" id="SSF55931">
    <property type="entry name" value="Glutamine synthetase/guanido kinase"/>
    <property type="match status" value="1"/>
</dbReference>
<dbReference type="PROSITE" id="PS00180">
    <property type="entry name" value="GLNA_1"/>
    <property type="match status" value="1"/>
</dbReference>
<dbReference type="PROSITE" id="PS00181">
    <property type="entry name" value="GLNA_ATP"/>
    <property type="match status" value="1"/>
</dbReference>
<dbReference type="PROSITE" id="PS51986">
    <property type="entry name" value="GS_BETA_GRASP"/>
    <property type="match status" value="1"/>
</dbReference>
<dbReference type="PROSITE" id="PS51987">
    <property type="entry name" value="GS_CATALYTIC"/>
    <property type="match status" value="1"/>
</dbReference>
<comment type="catalytic activity">
    <reaction>
        <text>L-glutamate + NH4(+) + ATP = L-glutamine + ADP + phosphate + H(+)</text>
        <dbReference type="Rhea" id="RHEA:16169"/>
        <dbReference type="ChEBI" id="CHEBI:15378"/>
        <dbReference type="ChEBI" id="CHEBI:28938"/>
        <dbReference type="ChEBI" id="CHEBI:29985"/>
        <dbReference type="ChEBI" id="CHEBI:30616"/>
        <dbReference type="ChEBI" id="CHEBI:43474"/>
        <dbReference type="ChEBI" id="CHEBI:58359"/>
        <dbReference type="ChEBI" id="CHEBI:456216"/>
        <dbReference type="EC" id="6.3.1.2"/>
    </reaction>
</comment>
<comment type="subunit">
    <text>Homooctamer.</text>
</comment>
<comment type="subcellular location">
    <subcellularLocation>
        <location>Cytoplasm</location>
    </subcellularLocation>
</comment>
<comment type="miscellaneous">
    <text>Irreversibly inhibited by the herbicide L-phosphinothricin (PPT).</text>
</comment>
<comment type="similarity">
    <text evidence="4">Belongs to the glutamine synthetase family.</text>
</comment>
<evidence type="ECO:0000255" key="1">
    <source>
        <dbReference type="PROSITE-ProRule" id="PRU01330"/>
    </source>
</evidence>
<evidence type="ECO:0000255" key="2">
    <source>
        <dbReference type="PROSITE-ProRule" id="PRU01331"/>
    </source>
</evidence>
<evidence type="ECO:0000256" key="3">
    <source>
        <dbReference type="SAM" id="MobiDB-lite"/>
    </source>
</evidence>
<evidence type="ECO:0000305" key="4"/>
<reference key="1">
    <citation type="journal article" date="1986" name="Mol. Gen. Genet.">
        <title>Nucleotide sequence of an alfalfa glutamine synthetase gene.</title>
        <authorList>
            <person name="Tischer E."/>
            <person name="Dassarma S."/>
            <person name="Goodman H.M."/>
        </authorList>
    </citation>
    <scope>NUCLEOTIDE SEQUENCE</scope>
</reference>
<reference key="2">
    <citation type="journal article" date="1984" name="J. Mol. Appl. Genet.">
        <title>Herbicide-resistant alfalfa cells: an example of gene amplification in plants.</title>
        <authorList>
            <person name="Donn G."/>
            <person name="Tischer E."/>
            <person name="Smith J.A."/>
            <person name="Goodman H.M."/>
        </authorList>
    </citation>
    <scope>NUCLEOTIDE SEQUENCE [MRNA] OF 266-356</scope>
</reference>
<feature type="chain" id="PRO_0000153183" description="Glutamine synthetase cytosolic isozyme">
    <location>
        <begin position="1"/>
        <end position="356"/>
    </location>
</feature>
<feature type="domain" description="GS beta-grasp" evidence="1">
    <location>
        <begin position="19"/>
        <end position="99"/>
    </location>
</feature>
<feature type="domain" description="GS catalytic" evidence="2">
    <location>
        <begin position="106"/>
        <end position="356"/>
    </location>
</feature>
<feature type="region of interest" description="Disordered" evidence="3">
    <location>
        <begin position="38"/>
        <end position="66"/>
    </location>
</feature>
<sequence length="356" mass="39107">MSLLSDLINLDLSETTEKIIAEYIWIGGSGLDLRSKARTLPGPVTDPSQLPKWNYDGSSTGQAPGEDSEVIIYPQAIFKDPFRRGNNILVMCDAYTPAGEPIPTNKRHAAAKIFSHPDVVAEVPWYGIEQEYTLLQKDINWPLGWPVGGFPGPQGPYYCGAGADKAFGRDIVDSHYKACLYAGINISGINGEVMPGQWEFQVGPSVGISAGDEIWVARYILERITEVAGVVLSFDPKPIKGDWNGAGAHTNYSTKSMREDGGYEVILKAIEKLGKKHKEHIAAYGEGNERRLTGRHETADINTFLWGVANRGASIRVGRDTEKAGKGYFEDRRPSSNMDPYVVTSMIADTTILWKP</sequence>
<name>GLNA1_MEDSA</name>
<protein>
    <recommendedName>
        <fullName>Glutamine synthetase cytosolic isozyme</fullName>
        <ecNumber>6.3.1.2</ecNumber>
    </recommendedName>
    <alternativeName>
        <fullName>Glutamate--ammonia ligase</fullName>
    </alternativeName>
</protein>